<feature type="chain" id="PRO_1000093621" description="DNA mismatch repair protein MutS">
    <location>
        <begin position="1"/>
        <end position="881"/>
    </location>
</feature>
<feature type="binding site" evidence="1">
    <location>
        <begin position="626"/>
        <end position="633"/>
    </location>
    <ligand>
        <name>ATP</name>
        <dbReference type="ChEBI" id="CHEBI:30616"/>
    </ligand>
</feature>
<reference key="1">
    <citation type="submission" date="2007-10" db="EMBL/GenBank/DDBJ databases">
        <title>Complete sequence of Desulfococcus oleovorans Hxd3.</title>
        <authorList>
            <consortium name="US DOE Joint Genome Institute"/>
            <person name="Copeland A."/>
            <person name="Lucas S."/>
            <person name="Lapidus A."/>
            <person name="Barry K."/>
            <person name="Glavina del Rio T."/>
            <person name="Dalin E."/>
            <person name="Tice H."/>
            <person name="Pitluck S."/>
            <person name="Kiss H."/>
            <person name="Brettin T."/>
            <person name="Bruce D."/>
            <person name="Detter J.C."/>
            <person name="Han C."/>
            <person name="Schmutz J."/>
            <person name="Larimer F."/>
            <person name="Land M."/>
            <person name="Hauser L."/>
            <person name="Kyrpides N."/>
            <person name="Kim E."/>
            <person name="Wawrik B."/>
            <person name="Richardson P."/>
        </authorList>
    </citation>
    <scope>NUCLEOTIDE SEQUENCE [LARGE SCALE GENOMIC DNA]</scope>
    <source>
        <strain>DSM 6200 / JCM 39069 / Hxd3</strain>
    </source>
</reference>
<keyword id="KW-0067">ATP-binding</keyword>
<keyword id="KW-0227">DNA damage</keyword>
<keyword id="KW-0234">DNA repair</keyword>
<keyword id="KW-0238">DNA-binding</keyword>
<keyword id="KW-0547">Nucleotide-binding</keyword>
<keyword id="KW-1185">Reference proteome</keyword>
<organism>
    <name type="scientific">Desulfosudis oleivorans (strain DSM 6200 / JCM 39069 / Hxd3)</name>
    <name type="common">Desulfococcus oleovorans</name>
    <dbReference type="NCBI Taxonomy" id="96561"/>
    <lineage>
        <taxon>Bacteria</taxon>
        <taxon>Pseudomonadati</taxon>
        <taxon>Thermodesulfobacteriota</taxon>
        <taxon>Desulfobacteria</taxon>
        <taxon>Desulfobacterales</taxon>
        <taxon>Desulfosudaceae</taxon>
        <taxon>Desulfosudis</taxon>
    </lineage>
</organism>
<evidence type="ECO:0000255" key="1">
    <source>
        <dbReference type="HAMAP-Rule" id="MF_00096"/>
    </source>
</evidence>
<sequence>MASTGATPMMQQYLSIKEQHRDAILFYRMGDFYEMFFEDAQTAAPVLEIALTSRNKNDTDPIPMCGVPVKAADGYIGRLIENGFKVAVCEQTEDPAAAKGLVRRDVVRIVTPGMIIDNALLEKGTNNYVVCLAHADGVVGFASVDISTGTFRVCESSDLRAVRHELLRIAPREVVIPESGADDAALSPFVSLFPPAIRTTLANREFDYRTACQRLTDQFQTRSLEGFGCRGLKPGIVAAGALLSYVNDTQRQKASHLTGLEVYSIDQYLLMDEVTCRNLELVANLRNNGRQGTLIDVLDACVTAMGSRLLRRWMLYPLLSAEAINRRLDAVAEAKEGLGTRKAVRELLKQVYDIERLTSRAVMGRVTPRDLLALKQTLFALPGLATELKSFDSPFFSFAGEPGPEGLDKLAGLADLLKAAVREDAPVSIADGGVINPDYHPRLAELVTISRDGKSSLARLEATEKEKTGISTLKVRYNKVFGYYIEVPRSQVGAVPAHYVRKQTLVNGERYITDELKVFEEKALGAEEQRVRLEQELFADIVGRVTACSPMLFAVARVAAGIDVLCALAQVADDHDYVRPEMLSGGEIIIEEGRHPVVERMLSGERYVPNSITLNDTDRQLLIITGPNMAGKSTVLRKVALFSVMAQMGSFVPARRAAMGVVDRLFTRVGALDNLASGQSTFMVEMEETANIINNATPKSLVVIDEIGRGTSTYDGLSIAWAVAEALHDLHGRGVKTLFATHYHELTELENTRPRVKNFHIAVKEWNDTIIFLRKLVEGSTNRSYGIQVARLAGIPGPVIARAKKILLDIEQGTYSFEAKSGTAPGTGQSGPVQLSLFTPPEQMLVDRLQKVDISTMTPLEALNCLHELQQKAHAISETDG</sequence>
<proteinExistence type="inferred from homology"/>
<dbReference type="EMBL" id="CP000859">
    <property type="protein sequence ID" value="ABW66933.1"/>
    <property type="molecule type" value="Genomic_DNA"/>
</dbReference>
<dbReference type="RefSeq" id="WP_012174551.1">
    <property type="nucleotide sequence ID" value="NC_009943.1"/>
</dbReference>
<dbReference type="SMR" id="A8ZXH5"/>
<dbReference type="STRING" id="96561.Dole_1126"/>
<dbReference type="KEGG" id="dol:Dole_1126"/>
<dbReference type="eggNOG" id="COG0249">
    <property type="taxonomic scope" value="Bacteria"/>
</dbReference>
<dbReference type="HOGENOM" id="CLU_002472_3_1_7"/>
<dbReference type="OrthoDB" id="9802448at2"/>
<dbReference type="Proteomes" id="UP000008561">
    <property type="component" value="Chromosome"/>
</dbReference>
<dbReference type="GO" id="GO:0005829">
    <property type="term" value="C:cytosol"/>
    <property type="evidence" value="ECO:0007669"/>
    <property type="project" value="TreeGrafter"/>
</dbReference>
<dbReference type="GO" id="GO:0005524">
    <property type="term" value="F:ATP binding"/>
    <property type="evidence" value="ECO:0007669"/>
    <property type="project" value="UniProtKB-UniRule"/>
</dbReference>
<dbReference type="GO" id="GO:0140664">
    <property type="term" value="F:ATP-dependent DNA damage sensor activity"/>
    <property type="evidence" value="ECO:0007669"/>
    <property type="project" value="InterPro"/>
</dbReference>
<dbReference type="GO" id="GO:0003684">
    <property type="term" value="F:damaged DNA binding"/>
    <property type="evidence" value="ECO:0007669"/>
    <property type="project" value="UniProtKB-UniRule"/>
</dbReference>
<dbReference type="GO" id="GO:0030983">
    <property type="term" value="F:mismatched DNA binding"/>
    <property type="evidence" value="ECO:0007669"/>
    <property type="project" value="InterPro"/>
</dbReference>
<dbReference type="GO" id="GO:0006298">
    <property type="term" value="P:mismatch repair"/>
    <property type="evidence" value="ECO:0007669"/>
    <property type="project" value="UniProtKB-UniRule"/>
</dbReference>
<dbReference type="CDD" id="cd03284">
    <property type="entry name" value="ABC_MutS1"/>
    <property type="match status" value="1"/>
</dbReference>
<dbReference type="FunFam" id="1.10.1420.10:FF:000001">
    <property type="entry name" value="DNA mismatch repair protein MutS"/>
    <property type="match status" value="1"/>
</dbReference>
<dbReference type="FunFam" id="3.40.1170.10:FF:000001">
    <property type="entry name" value="DNA mismatch repair protein MutS"/>
    <property type="match status" value="1"/>
</dbReference>
<dbReference type="FunFam" id="3.40.50.300:FF:000870">
    <property type="entry name" value="MutS protein homolog 4"/>
    <property type="match status" value="1"/>
</dbReference>
<dbReference type="Gene3D" id="1.10.1420.10">
    <property type="match status" value="2"/>
</dbReference>
<dbReference type="Gene3D" id="3.40.1170.10">
    <property type="entry name" value="DNA repair protein MutS, domain I"/>
    <property type="match status" value="1"/>
</dbReference>
<dbReference type="Gene3D" id="3.30.420.110">
    <property type="entry name" value="MutS, connector domain"/>
    <property type="match status" value="1"/>
</dbReference>
<dbReference type="Gene3D" id="3.40.50.300">
    <property type="entry name" value="P-loop containing nucleotide triphosphate hydrolases"/>
    <property type="match status" value="1"/>
</dbReference>
<dbReference type="HAMAP" id="MF_00096">
    <property type="entry name" value="MutS"/>
    <property type="match status" value="1"/>
</dbReference>
<dbReference type="InterPro" id="IPR005748">
    <property type="entry name" value="DNA_mismatch_repair_MutS"/>
</dbReference>
<dbReference type="InterPro" id="IPR007695">
    <property type="entry name" value="DNA_mismatch_repair_MutS-lik_N"/>
</dbReference>
<dbReference type="InterPro" id="IPR017261">
    <property type="entry name" value="DNA_mismatch_repair_MutS/MSH"/>
</dbReference>
<dbReference type="InterPro" id="IPR000432">
    <property type="entry name" value="DNA_mismatch_repair_MutS_C"/>
</dbReference>
<dbReference type="InterPro" id="IPR007861">
    <property type="entry name" value="DNA_mismatch_repair_MutS_clamp"/>
</dbReference>
<dbReference type="InterPro" id="IPR007696">
    <property type="entry name" value="DNA_mismatch_repair_MutS_core"/>
</dbReference>
<dbReference type="InterPro" id="IPR016151">
    <property type="entry name" value="DNA_mismatch_repair_MutS_N"/>
</dbReference>
<dbReference type="InterPro" id="IPR036187">
    <property type="entry name" value="DNA_mismatch_repair_MutS_sf"/>
</dbReference>
<dbReference type="InterPro" id="IPR007860">
    <property type="entry name" value="DNA_mmatch_repair_MutS_con_dom"/>
</dbReference>
<dbReference type="InterPro" id="IPR045076">
    <property type="entry name" value="MutS"/>
</dbReference>
<dbReference type="InterPro" id="IPR036678">
    <property type="entry name" value="MutS_con_dom_sf"/>
</dbReference>
<dbReference type="InterPro" id="IPR027417">
    <property type="entry name" value="P-loop_NTPase"/>
</dbReference>
<dbReference type="NCBIfam" id="TIGR01070">
    <property type="entry name" value="mutS1"/>
    <property type="match status" value="1"/>
</dbReference>
<dbReference type="NCBIfam" id="NF003810">
    <property type="entry name" value="PRK05399.1"/>
    <property type="match status" value="1"/>
</dbReference>
<dbReference type="PANTHER" id="PTHR11361:SF34">
    <property type="entry name" value="DNA MISMATCH REPAIR PROTEIN MSH1, MITOCHONDRIAL"/>
    <property type="match status" value="1"/>
</dbReference>
<dbReference type="PANTHER" id="PTHR11361">
    <property type="entry name" value="DNA MISMATCH REPAIR PROTEIN MUTS FAMILY MEMBER"/>
    <property type="match status" value="1"/>
</dbReference>
<dbReference type="Pfam" id="PF01624">
    <property type="entry name" value="MutS_I"/>
    <property type="match status" value="1"/>
</dbReference>
<dbReference type="Pfam" id="PF05188">
    <property type="entry name" value="MutS_II"/>
    <property type="match status" value="1"/>
</dbReference>
<dbReference type="Pfam" id="PF05192">
    <property type="entry name" value="MutS_III"/>
    <property type="match status" value="1"/>
</dbReference>
<dbReference type="Pfam" id="PF05190">
    <property type="entry name" value="MutS_IV"/>
    <property type="match status" value="1"/>
</dbReference>
<dbReference type="Pfam" id="PF00488">
    <property type="entry name" value="MutS_V"/>
    <property type="match status" value="1"/>
</dbReference>
<dbReference type="PIRSF" id="PIRSF037677">
    <property type="entry name" value="DNA_mis_repair_Msh6"/>
    <property type="match status" value="1"/>
</dbReference>
<dbReference type="SMART" id="SM00534">
    <property type="entry name" value="MUTSac"/>
    <property type="match status" value="1"/>
</dbReference>
<dbReference type="SMART" id="SM00533">
    <property type="entry name" value="MUTSd"/>
    <property type="match status" value="1"/>
</dbReference>
<dbReference type="SUPFAM" id="SSF55271">
    <property type="entry name" value="DNA repair protein MutS, domain I"/>
    <property type="match status" value="1"/>
</dbReference>
<dbReference type="SUPFAM" id="SSF53150">
    <property type="entry name" value="DNA repair protein MutS, domain II"/>
    <property type="match status" value="1"/>
</dbReference>
<dbReference type="SUPFAM" id="SSF48334">
    <property type="entry name" value="DNA repair protein MutS, domain III"/>
    <property type="match status" value="1"/>
</dbReference>
<dbReference type="SUPFAM" id="SSF52540">
    <property type="entry name" value="P-loop containing nucleoside triphosphate hydrolases"/>
    <property type="match status" value="1"/>
</dbReference>
<dbReference type="PROSITE" id="PS00486">
    <property type="entry name" value="DNA_MISMATCH_REPAIR_2"/>
    <property type="match status" value="1"/>
</dbReference>
<gene>
    <name evidence="1" type="primary">mutS</name>
    <name type="ordered locus">Dole_1126</name>
</gene>
<comment type="function">
    <text evidence="1">This protein is involved in the repair of mismatches in DNA. It is possible that it carries out the mismatch recognition step. This protein has a weak ATPase activity.</text>
</comment>
<comment type="similarity">
    <text evidence="1">Belongs to the DNA mismatch repair MutS family.</text>
</comment>
<name>MUTS_DESOH</name>
<accession>A8ZXH5</accession>
<protein>
    <recommendedName>
        <fullName evidence="1">DNA mismatch repair protein MutS</fullName>
    </recommendedName>
</protein>